<accession>O67244</accession>
<keyword id="KW-0975">Bacterial flagellum</keyword>
<keyword id="KW-1185">Reference proteome</keyword>
<proteinExistence type="inferred from homology"/>
<protein>
    <recommendedName>
        <fullName>Flagellar basal body rod protein FlgB</fullName>
    </recommendedName>
</protein>
<dbReference type="EMBL" id="AE000657">
    <property type="protein sequence ID" value="AAC07194.1"/>
    <property type="molecule type" value="Genomic_DNA"/>
</dbReference>
<dbReference type="PIR" id="A70402">
    <property type="entry name" value="A70402"/>
</dbReference>
<dbReference type="RefSeq" id="NP_213808.1">
    <property type="nucleotide sequence ID" value="NC_000918.1"/>
</dbReference>
<dbReference type="RefSeq" id="WP_010880746.1">
    <property type="nucleotide sequence ID" value="NC_000918.1"/>
</dbReference>
<dbReference type="SMR" id="O67244"/>
<dbReference type="FunCoup" id="O67244">
    <property type="interactions" value="39"/>
</dbReference>
<dbReference type="STRING" id="224324.aq_1184"/>
<dbReference type="EnsemblBacteria" id="AAC07194">
    <property type="protein sequence ID" value="AAC07194"/>
    <property type="gene ID" value="aq_1184"/>
</dbReference>
<dbReference type="KEGG" id="aae:aq_1184"/>
<dbReference type="PATRIC" id="fig|224324.8.peg.921"/>
<dbReference type="eggNOG" id="COG1815">
    <property type="taxonomic scope" value="Bacteria"/>
</dbReference>
<dbReference type="HOGENOM" id="CLU_125463_3_1_0"/>
<dbReference type="InParanoid" id="O67244"/>
<dbReference type="OrthoDB" id="9792068at2"/>
<dbReference type="Proteomes" id="UP000000798">
    <property type="component" value="Chromosome"/>
</dbReference>
<dbReference type="GO" id="GO:0009288">
    <property type="term" value="C:bacterial-type flagellum"/>
    <property type="evidence" value="ECO:0000318"/>
    <property type="project" value="GO_Central"/>
</dbReference>
<dbReference type="GO" id="GO:0030694">
    <property type="term" value="C:bacterial-type flagellum basal body, rod"/>
    <property type="evidence" value="ECO:0007669"/>
    <property type="project" value="InterPro"/>
</dbReference>
<dbReference type="GO" id="GO:0071978">
    <property type="term" value="P:bacterial-type flagellum-dependent swarming motility"/>
    <property type="evidence" value="ECO:0000318"/>
    <property type="project" value="GO_Central"/>
</dbReference>
<dbReference type="InterPro" id="IPR006300">
    <property type="entry name" value="FlgB"/>
</dbReference>
<dbReference type="NCBIfam" id="TIGR01396">
    <property type="entry name" value="FlgB"/>
    <property type="match status" value="1"/>
</dbReference>
<dbReference type="PIRSF" id="PIRSF002889">
    <property type="entry name" value="Rod_FlgB"/>
    <property type="match status" value="1"/>
</dbReference>
<sequence length="124" mass="14671">MDLFRGVNLYKKYINFTWKRHKVLLGNLANADTPNYKRRDLIFFLEPPTIPLKTTHNKHVKNFRKFEERLVVFKNGLQGNDRNNVSIERELSEIVKNKLAYETYLKFAMGSLNTLNRVIKGRAE</sequence>
<name>FLGB_AQUAE</name>
<feature type="chain" id="PRO_0000180783" description="Flagellar basal body rod protein FlgB">
    <location>
        <begin position="1"/>
        <end position="124"/>
    </location>
</feature>
<gene>
    <name type="primary">flgB</name>
    <name type="ordered locus">aq_1184</name>
</gene>
<comment type="function">
    <text evidence="1">Structural component of flagellum, the bacterial motility apparatus. Part of the rod structure of flagellar basal body (By similarity).</text>
</comment>
<comment type="subunit">
    <text evidence="1">The basal body constitutes a major portion of the flagellar organelle and consists of a number of rings mounted on a central rod. In Gram-negative bacteria, at least four rings, L, P, S and M are present, whereas Gram-positive bacteria lack the L and P rings. The rod consists of about 26 subunits of FlgG in the distal portion, and FlgB, FlgC and FlgF build up the proximal portion of the rod with about 6 subunits each. Rod assembly occurs by export via the flagellum-specific pathway of its constituent proteins and by their incorporation into the rod structure in the probable order of FlgB, FlgC, FlgF and FlgG. Another protein, FliE, also assembles onto the stable rod structure (By similarity).</text>
</comment>
<comment type="subcellular location">
    <subcellularLocation>
        <location evidence="1">Bacterial flagellum basal body</location>
    </subcellularLocation>
</comment>
<comment type="similarity">
    <text evidence="2">Belongs to the flagella basal body rod proteins family.</text>
</comment>
<organism>
    <name type="scientific">Aquifex aeolicus (strain VF5)</name>
    <dbReference type="NCBI Taxonomy" id="224324"/>
    <lineage>
        <taxon>Bacteria</taxon>
        <taxon>Pseudomonadati</taxon>
        <taxon>Aquificota</taxon>
        <taxon>Aquificia</taxon>
        <taxon>Aquificales</taxon>
        <taxon>Aquificaceae</taxon>
        <taxon>Aquifex</taxon>
    </lineage>
</organism>
<evidence type="ECO:0000250" key="1"/>
<evidence type="ECO:0000305" key="2"/>
<reference key="1">
    <citation type="journal article" date="1998" name="Nature">
        <title>The complete genome of the hyperthermophilic bacterium Aquifex aeolicus.</title>
        <authorList>
            <person name="Deckert G."/>
            <person name="Warren P.V."/>
            <person name="Gaasterland T."/>
            <person name="Young W.G."/>
            <person name="Lenox A.L."/>
            <person name="Graham D.E."/>
            <person name="Overbeek R."/>
            <person name="Snead M.A."/>
            <person name="Keller M."/>
            <person name="Aujay M."/>
            <person name="Huber R."/>
            <person name="Feldman R.A."/>
            <person name="Short J.M."/>
            <person name="Olsen G.J."/>
            <person name="Swanson R.V."/>
        </authorList>
    </citation>
    <scope>NUCLEOTIDE SEQUENCE [LARGE SCALE GENOMIC DNA]</scope>
    <source>
        <strain>VF5</strain>
    </source>
</reference>